<accession>A7MGS4</accession>
<comment type="function">
    <text evidence="1">dGTPase preferentially hydrolyzes dGTP over the other canonical NTPs.</text>
</comment>
<comment type="catalytic activity">
    <reaction evidence="1">
        <text>dGTP + H2O = 2'-deoxyguanosine + triphosphate + H(+)</text>
        <dbReference type="Rhea" id="RHEA:15193"/>
        <dbReference type="ChEBI" id="CHEBI:15377"/>
        <dbReference type="ChEBI" id="CHEBI:15378"/>
        <dbReference type="ChEBI" id="CHEBI:17172"/>
        <dbReference type="ChEBI" id="CHEBI:18036"/>
        <dbReference type="ChEBI" id="CHEBI:61429"/>
        <dbReference type="EC" id="3.1.5.1"/>
    </reaction>
</comment>
<comment type="cofactor">
    <cofactor evidence="1">
        <name>Mg(2+)</name>
        <dbReference type="ChEBI" id="CHEBI:18420"/>
    </cofactor>
</comment>
<comment type="subunit">
    <text evidence="1">Homotetramer.</text>
</comment>
<comment type="similarity">
    <text evidence="1">Belongs to the dGTPase family. Type 1 subfamily.</text>
</comment>
<keyword id="KW-0378">Hydrolase</keyword>
<keyword id="KW-0460">Magnesium</keyword>
<keyword id="KW-1185">Reference proteome</keyword>
<sequence>MEKIDFRNKINWHRRYRSPQGVKSEHEILRIFESDRGRIINSPAIRRLQQKTQVFPLERNAAVRTRLTHSLEVQQVGRYIAKEVLSRLKEQGLLEAYGLSELTGPFESIVEMSCLMHDIGNPPFGHFGEAAINDWFSQRLFPADAENLPVSQDRCTVQTLRLQEGEEALNALRGNVRRDLCHFEGNAQGIRLVHTLLRMNLTWAQVGGILKYSRPAWHHGPVPETHSYLMKKPGFYLSEDQYISRLRKELQLDTYSRFPLAWIMEAADDISYCVADLEDAVEKRIFSVEQLYQHLYDAWGEHAPGDLFNLVVQNAWDKSGTNQLHHSAEDQFFMYLRVNTLNRLAPYAAQRFIDNLPDVFNGSFNHALLEDDSPYSRLLELYKNVAVRHVFNHPDVEQLELQGYRVISGLLDIYSPLLALTLAQFRELVEKESVRSLPIESRLYHKLSSRHRLAYIEAVSHLHPQAADFPVWEYYYRCRLIQDYISGMTDLYAWDEYRKLMAVE</sequence>
<feature type="chain" id="PRO_1000116918" description="Deoxyguanosinetriphosphate triphosphohydrolase">
    <location>
        <begin position="1"/>
        <end position="504"/>
    </location>
</feature>
<feature type="domain" description="HD" evidence="2">
    <location>
        <begin position="66"/>
        <end position="273"/>
    </location>
</feature>
<name>DGTP_CROS8</name>
<protein>
    <recommendedName>
        <fullName evidence="1">Deoxyguanosinetriphosphate triphosphohydrolase</fullName>
        <shortName evidence="1">dGTP triphosphohydrolase</shortName>
        <shortName evidence="1">dGTPase</shortName>
        <ecNumber evidence="1">3.1.5.1</ecNumber>
    </recommendedName>
</protein>
<reference key="1">
    <citation type="journal article" date="2010" name="PLoS ONE">
        <title>Genome sequence of Cronobacter sakazakii BAA-894 and comparative genomic hybridization analysis with other Cronobacter species.</title>
        <authorList>
            <person name="Kucerova E."/>
            <person name="Clifton S.W."/>
            <person name="Xia X.Q."/>
            <person name="Long F."/>
            <person name="Porwollik S."/>
            <person name="Fulton L."/>
            <person name="Fronick C."/>
            <person name="Minx P."/>
            <person name="Kyung K."/>
            <person name="Warren W."/>
            <person name="Fulton R."/>
            <person name="Feng D."/>
            <person name="Wollam A."/>
            <person name="Shah N."/>
            <person name="Bhonagiri V."/>
            <person name="Nash W.E."/>
            <person name="Hallsworth-Pepin K."/>
            <person name="Wilson R.K."/>
            <person name="McClelland M."/>
            <person name="Forsythe S.J."/>
        </authorList>
    </citation>
    <scope>NUCLEOTIDE SEQUENCE [LARGE SCALE GENOMIC DNA]</scope>
    <source>
        <strain>ATCC BAA-894</strain>
    </source>
</reference>
<dbReference type="EC" id="3.1.5.1" evidence="1"/>
<dbReference type="EMBL" id="CP000783">
    <property type="protein sequence ID" value="ABU78402.1"/>
    <property type="molecule type" value="Genomic_DNA"/>
</dbReference>
<dbReference type="RefSeq" id="WP_012125718.1">
    <property type="nucleotide sequence ID" value="NC_009778.1"/>
</dbReference>
<dbReference type="SMR" id="A7MGS4"/>
<dbReference type="KEGG" id="esa:ESA_03180"/>
<dbReference type="PATRIC" id="fig|290339.8.peg.2811"/>
<dbReference type="HOGENOM" id="CLU_028163_2_1_6"/>
<dbReference type="Proteomes" id="UP000000260">
    <property type="component" value="Chromosome"/>
</dbReference>
<dbReference type="GO" id="GO:0008832">
    <property type="term" value="F:dGTPase activity"/>
    <property type="evidence" value="ECO:0007669"/>
    <property type="project" value="UniProtKB-UniRule"/>
</dbReference>
<dbReference type="GO" id="GO:0000287">
    <property type="term" value="F:magnesium ion binding"/>
    <property type="evidence" value="ECO:0007669"/>
    <property type="project" value="UniProtKB-UniRule"/>
</dbReference>
<dbReference type="GO" id="GO:0006203">
    <property type="term" value="P:dGTP catabolic process"/>
    <property type="evidence" value="ECO:0007669"/>
    <property type="project" value="InterPro"/>
</dbReference>
<dbReference type="CDD" id="cd00077">
    <property type="entry name" value="HDc"/>
    <property type="match status" value="1"/>
</dbReference>
<dbReference type="FunFam" id="1.10.3210.10:FF:000009">
    <property type="entry name" value="Deoxyguanosinetriphosphate triphosphohydrolase"/>
    <property type="match status" value="1"/>
</dbReference>
<dbReference type="FunFam" id="1.10.3210.10:FF:000010">
    <property type="entry name" value="Deoxyguanosinetriphosphate triphosphohydrolase"/>
    <property type="match status" value="1"/>
</dbReference>
<dbReference type="FunFam" id="1.10.3410.10:FF:000001">
    <property type="entry name" value="Deoxyguanosinetriphosphate triphosphohydrolase"/>
    <property type="match status" value="1"/>
</dbReference>
<dbReference type="Gene3D" id="1.10.3210.10">
    <property type="entry name" value="Hypothetical protein af1432"/>
    <property type="match status" value="2"/>
</dbReference>
<dbReference type="Gene3D" id="1.10.3410.10">
    <property type="entry name" value="putative deoxyguanosinetriphosphate triphosphohydrolase like domain"/>
    <property type="match status" value="1"/>
</dbReference>
<dbReference type="HAMAP" id="MF_00030">
    <property type="entry name" value="dGTPase_type1"/>
    <property type="match status" value="1"/>
</dbReference>
<dbReference type="InterPro" id="IPR023293">
    <property type="entry name" value="dGTP_triP_hydro_central_sf"/>
</dbReference>
<dbReference type="InterPro" id="IPR006261">
    <property type="entry name" value="dGTPase"/>
</dbReference>
<dbReference type="InterPro" id="IPR050135">
    <property type="entry name" value="dGTPase-like"/>
</dbReference>
<dbReference type="InterPro" id="IPR020779">
    <property type="entry name" value="dNTPase_1"/>
</dbReference>
<dbReference type="InterPro" id="IPR003607">
    <property type="entry name" value="HD/PDEase_dom"/>
</dbReference>
<dbReference type="InterPro" id="IPR006674">
    <property type="entry name" value="HD_domain"/>
</dbReference>
<dbReference type="NCBIfam" id="TIGR01353">
    <property type="entry name" value="dGTP_triPase"/>
    <property type="match status" value="1"/>
</dbReference>
<dbReference type="NCBIfam" id="NF003429">
    <property type="entry name" value="PRK04926.1"/>
    <property type="match status" value="1"/>
</dbReference>
<dbReference type="PANTHER" id="PTHR11373:SF32">
    <property type="entry name" value="DEOXYGUANOSINETRIPHOSPHATE TRIPHOSPHOHYDROLASE"/>
    <property type="match status" value="1"/>
</dbReference>
<dbReference type="PANTHER" id="PTHR11373">
    <property type="entry name" value="DEOXYNUCLEOSIDE TRIPHOSPHATE TRIPHOSPHOHYDROLASE"/>
    <property type="match status" value="1"/>
</dbReference>
<dbReference type="Pfam" id="PF01966">
    <property type="entry name" value="HD"/>
    <property type="match status" value="1"/>
</dbReference>
<dbReference type="SMART" id="SM00471">
    <property type="entry name" value="HDc"/>
    <property type="match status" value="1"/>
</dbReference>
<dbReference type="SUPFAM" id="SSF109604">
    <property type="entry name" value="HD-domain/PDEase-like"/>
    <property type="match status" value="1"/>
</dbReference>
<dbReference type="PROSITE" id="PS51831">
    <property type="entry name" value="HD"/>
    <property type="match status" value="1"/>
</dbReference>
<gene>
    <name evidence="1" type="primary">dgt</name>
    <name type="ordered locus">ESA_03180</name>
</gene>
<organism>
    <name type="scientific">Cronobacter sakazakii (strain ATCC BAA-894)</name>
    <name type="common">Enterobacter sakazakii</name>
    <dbReference type="NCBI Taxonomy" id="290339"/>
    <lineage>
        <taxon>Bacteria</taxon>
        <taxon>Pseudomonadati</taxon>
        <taxon>Pseudomonadota</taxon>
        <taxon>Gammaproteobacteria</taxon>
        <taxon>Enterobacterales</taxon>
        <taxon>Enterobacteriaceae</taxon>
        <taxon>Cronobacter</taxon>
    </lineage>
</organism>
<evidence type="ECO:0000255" key="1">
    <source>
        <dbReference type="HAMAP-Rule" id="MF_00030"/>
    </source>
</evidence>
<evidence type="ECO:0000255" key="2">
    <source>
        <dbReference type="PROSITE-ProRule" id="PRU01175"/>
    </source>
</evidence>
<proteinExistence type="inferred from homology"/>